<reference key="1">
    <citation type="submission" date="2004-06" db="EMBL/GenBank/DDBJ databases">
        <authorList>
            <consortium name="NIH - Xenopus Gene Collection (XGC) project"/>
        </authorList>
    </citation>
    <scope>NUCLEOTIDE SEQUENCE [LARGE SCALE MRNA]</scope>
    <source>
        <tissue>Eye</tissue>
    </source>
</reference>
<proteinExistence type="evidence at transcript level"/>
<feature type="chain" id="PRO_0000288462" description="BRISC and BRCA1-A complex member 1">
    <location>
        <begin position="1"/>
        <end position="328"/>
    </location>
</feature>
<feature type="region of interest" description="Disordered" evidence="2">
    <location>
        <begin position="1"/>
        <end position="84"/>
    </location>
</feature>
<feature type="region of interest" description="VWFA-like">
    <location>
        <begin position="96"/>
        <end position="297"/>
    </location>
</feature>
<feature type="compositionally biased region" description="Polar residues" evidence="2">
    <location>
        <begin position="1"/>
        <end position="13"/>
    </location>
</feature>
<feature type="compositionally biased region" description="Low complexity" evidence="2">
    <location>
        <begin position="64"/>
        <end position="74"/>
    </location>
</feature>
<name>BABA1_XENLA</name>
<gene>
    <name type="primary">babam1</name>
    <name type="synonym">merit40</name>
    <name type="synonym">nba1</name>
</gene>
<keyword id="KW-0131">Cell cycle</keyword>
<keyword id="KW-0132">Cell division</keyword>
<keyword id="KW-0156">Chromatin regulator</keyword>
<keyword id="KW-0963">Cytoplasm</keyword>
<keyword id="KW-0227">DNA damage</keyword>
<keyword id="KW-0234">DNA repair</keyword>
<keyword id="KW-0498">Mitosis</keyword>
<keyword id="KW-0539">Nucleus</keyword>
<keyword id="KW-1185">Reference proteome</keyword>
<keyword id="KW-0833">Ubl conjugation pathway</keyword>
<organism>
    <name type="scientific">Xenopus laevis</name>
    <name type="common">African clawed frog</name>
    <dbReference type="NCBI Taxonomy" id="8355"/>
    <lineage>
        <taxon>Eukaryota</taxon>
        <taxon>Metazoa</taxon>
        <taxon>Chordata</taxon>
        <taxon>Craniata</taxon>
        <taxon>Vertebrata</taxon>
        <taxon>Euteleostomi</taxon>
        <taxon>Amphibia</taxon>
        <taxon>Batrachia</taxon>
        <taxon>Anura</taxon>
        <taxon>Pipoidea</taxon>
        <taxon>Pipidae</taxon>
        <taxon>Xenopodinae</taxon>
        <taxon>Xenopus</taxon>
        <taxon>Xenopus</taxon>
    </lineage>
</organism>
<sequence>MDNSTEETFSMDTSEPLEEGEQTHEQRPHTRSNPEGAEDRGVVHQAGVGSRSEGEGEAAQVEDPLPTTTTVPTNSTPPPTLEFQLKTPRVNCPEKVIICLDLSEEMSTQKLESFNGSKANALNSSQKMIEMFVRTKHKIDKRHEFALVVANNEAMWLSGFTSDPREVCSCLYDLETNVCESFNLEGLFNLIQQRTEFPVTDNVQTIPPPYVVRIILIYSRPASQPALALTDNMKKMLQCPYFFFDVIYIHNGSEEEELCWKDIFGFFSSLDSKGTSYKYEVSITGPALELHNCMARLLAHPLQRPFQSHAAYSLLEEEEESPESEVTV</sequence>
<accession>Q6DJG6</accession>
<dbReference type="EMBL" id="BC075213">
    <property type="protein sequence ID" value="AAH75213.1"/>
    <property type="molecule type" value="mRNA"/>
</dbReference>
<dbReference type="RefSeq" id="NP_001086385.1">
    <property type="nucleotide sequence ID" value="NM_001092916.1"/>
</dbReference>
<dbReference type="RefSeq" id="XP_018101334.1">
    <property type="nucleotide sequence ID" value="XM_018245845.1"/>
</dbReference>
<dbReference type="SMR" id="Q6DJG6"/>
<dbReference type="DNASU" id="444814"/>
<dbReference type="GeneID" id="444814"/>
<dbReference type="KEGG" id="xla:444814"/>
<dbReference type="AGR" id="Xenbase:XB-GENE-5731110"/>
<dbReference type="CTD" id="444814"/>
<dbReference type="Xenbase" id="XB-GENE-5731110">
    <property type="gene designation" value="babam1.L"/>
</dbReference>
<dbReference type="OMA" id="SCTTAWP"/>
<dbReference type="OrthoDB" id="547311at2759"/>
<dbReference type="Proteomes" id="UP000186698">
    <property type="component" value="Chromosome 1L"/>
</dbReference>
<dbReference type="Bgee" id="444814">
    <property type="expression patterns" value="Expressed in testis and 19 other cell types or tissues"/>
</dbReference>
<dbReference type="GO" id="GO:0070531">
    <property type="term" value="C:BRCA1-A complex"/>
    <property type="evidence" value="ECO:0000250"/>
    <property type="project" value="UniProtKB"/>
</dbReference>
<dbReference type="GO" id="GO:0070552">
    <property type="term" value="C:BRISC complex"/>
    <property type="evidence" value="ECO:0000250"/>
    <property type="project" value="UniProtKB"/>
</dbReference>
<dbReference type="GO" id="GO:0005737">
    <property type="term" value="C:cytoplasm"/>
    <property type="evidence" value="ECO:0000250"/>
    <property type="project" value="UniProtKB"/>
</dbReference>
<dbReference type="GO" id="GO:0016604">
    <property type="term" value="C:nuclear body"/>
    <property type="evidence" value="ECO:0000318"/>
    <property type="project" value="GO_Central"/>
</dbReference>
<dbReference type="GO" id="GO:0005634">
    <property type="term" value="C:nucleus"/>
    <property type="evidence" value="ECO:0000250"/>
    <property type="project" value="UniProtKB"/>
</dbReference>
<dbReference type="GO" id="GO:0051301">
    <property type="term" value="P:cell division"/>
    <property type="evidence" value="ECO:0007669"/>
    <property type="project" value="UniProtKB-KW"/>
</dbReference>
<dbReference type="GO" id="GO:0140861">
    <property type="term" value="P:DNA repair-dependent chromatin remodeling"/>
    <property type="evidence" value="ECO:0000250"/>
    <property type="project" value="UniProtKB"/>
</dbReference>
<dbReference type="GO" id="GO:0006302">
    <property type="term" value="P:double-strand break repair"/>
    <property type="evidence" value="ECO:0000250"/>
    <property type="project" value="UniProtKB"/>
</dbReference>
<dbReference type="GO" id="GO:0007095">
    <property type="term" value="P:mitotic G2 DNA damage checkpoint signaling"/>
    <property type="evidence" value="ECO:0000250"/>
    <property type="project" value="UniProtKB"/>
</dbReference>
<dbReference type="GO" id="GO:0045739">
    <property type="term" value="P:positive regulation of DNA repair"/>
    <property type="evidence" value="ECO:0000250"/>
    <property type="project" value="UniProtKB"/>
</dbReference>
<dbReference type="GO" id="GO:0010212">
    <property type="term" value="P:response to ionizing radiation"/>
    <property type="evidence" value="ECO:0000250"/>
    <property type="project" value="UniProtKB"/>
</dbReference>
<dbReference type="CDD" id="cd21502">
    <property type="entry name" value="vWA_BABAM1"/>
    <property type="match status" value="1"/>
</dbReference>
<dbReference type="Gene3D" id="3.40.50.410">
    <property type="entry name" value="von Willebrand factor, type A domain"/>
    <property type="match status" value="1"/>
</dbReference>
<dbReference type="InterPro" id="IPR026126">
    <property type="entry name" value="BABAM1"/>
</dbReference>
<dbReference type="InterPro" id="IPR036465">
    <property type="entry name" value="vWFA_dom_sf"/>
</dbReference>
<dbReference type="PANTHER" id="PTHR15660">
    <property type="entry name" value="BRISC AND BRCA1-A COMPLEX MEMBER 1"/>
    <property type="match status" value="1"/>
</dbReference>
<dbReference type="PANTHER" id="PTHR15660:SF1">
    <property type="entry name" value="BRISC AND BRCA1-A COMPLEX MEMBER 1"/>
    <property type="match status" value="1"/>
</dbReference>
<dbReference type="SUPFAM" id="SSF53300">
    <property type="entry name" value="vWA-like"/>
    <property type="match status" value="1"/>
</dbReference>
<evidence type="ECO:0000250" key="1">
    <source>
        <dbReference type="UniProtKB" id="Q9NWV8"/>
    </source>
</evidence>
<evidence type="ECO:0000256" key="2">
    <source>
        <dbReference type="SAM" id="MobiDB-lite"/>
    </source>
</evidence>
<evidence type="ECO:0000305" key="3"/>
<comment type="function">
    <text evidence="1">Component of the BRCA1-A complex, a complex that specifically recognizes 'Lys-63'-linked ubiquitinated histones H2A and H2AX at DNA lesions sites, leading to target the BRCA1-BARD1 heterodimer to sites of DNA damage at double-strand breaks (DSBs). The BRCA1-A complex also possesses deubiquitinase activity that specifically removes 'Lys-63'-linked ubiquitin on histones H2A and H2AX. In the BRCA1-A complex, it is required for the complex integrity and its localization at DSBs. Component of the BRISC complex, a multiprotein complex that specifically cleaves 'Lys-63'-linked ubiquitin in various substrates. In these 2 complexes, it is probably required to maintain the stability of babam2 and help the 'Lys-63'-linked deubiquitinase activity mediated by brcc3/brcc36 component. The BRISC complex is required for normal mitotic spindle assembly and microtubule attachment to kinetochores via its role in deubiquitinating numa1. Plays a role in interferon signaling via its role in the deubiquitination of the interferon receptor ifnar1; deubiquitination increases ifnar1 activity by enhancing its stability and cell surface expression. Down-regulates the response to bacterial lipopolysaccharide (LPS) via its role in ifnar1 deubiquitination.</text>
</comment>
<comment type="subunit">
    <text evidence="1">Component of the ARISC complex, at least composed of uimc1/rap80, abraxas1, brcc3/brcc36, BABAM2 and babam1/nba1. Component of the BRCA1-A complex, at least composed of brca1, bard1, uimc1/rap80, abraxas1, brcc3/brcc36, BABAM2 and babam1/nba1. In the BRCA1-A complex, interacts directly with abraxas1 and BABAM2. Component of the BRISC complex, at least composed of abraxas2, brcc3/brcc36, babam2 and babam1/nba1.</text>
</comment>
<comment type="subcellular location">
    <subcellularLocation>
        <location evidence="1">Cytoplasm</location>
    </subcellularLocation>
    <subcellularLocation>
        <location evidence="1">Nucleus</location>
    </subcellularLocation>
    <text evidence="1">Localizes at sites of DNA damage at double-strand breaks (DSBs).</text>
</comment>
<comment type="domain">
    <text evidence="1">The VWFA-like region is similar to the VWFA domain. Its presence reveals similarities between the structure of the 19S proteasome and the BRCA1-A complexes.</text>
</comment>
<comment type="similarity">
    <text evidence="3">Belongs to the BABAM1 family.</text>
</comment>
<protein>
    <recommendedName>
        <fullName>BRISC and BRCA1-A complex member 1</fullName>
    </recommendedName>
    <alternativeName>
        <fullName>Mediator of RAP80 interactions and targeting subunit of 40 kDa</fullName>
    </alternativeName>
    <alternativeName>
        <fullName>New component of the BRCA1-A complex</fullName>
    </alternativeName>
</protein>